<evidence type="ECO:0000250" key="1"/>
<evidence type="ECO:0000255" key="2">
    <source>
        <dbReference type="PROSITE-ProRule" id="PRU10101"/>
    </source>
</evidence>
<evidence type="ECO:0000305" key="3"/>
<evidence type="ECO:0000305" key="4">
    <source>
    </source>
</evidence>
<reference key="1">
    <citation type="submission" date="1994-08" db="EMBL/GenBank/DDBJ databases">
        <title>Identification of penicillinase-encoding genes of Bacillus amyloliquefaciens and Bacillus subtilis.</title>
        <authorList>
            <person name="van Dijl J.M."/>
            <person name="de Jong A."/>
            <person name="Nauta A."/>
            <person name="Venema G."/>
            <person name="Bron S."/>
        </authorList>
    </citation>
    <scope>NUCLEOTIDE SEQUENCE [GENOMIC DNA]</scope>
</reference>
<reference key="2">
    <citation type="journal article" date="1991" name="Biochem. J.">
        <title>A standard numbering scheme for the class A beta-lactamases.</title>
        <authorList>
            <person name="Ambler R.P."/>
            <person name="Coulson A.F."/>
            <person name="Frere J.M."/>
            <person name="Ghuysen J.M."/>
            <person name="Joris B."/>
            <person name="Forsman M."/>
            <person name="Levesque R.C."/>
            <person name="Tiraby G."/>
            <person name="Waley S.G."/>
        </authorList>
    </citation>
    <scope>AMINO ACID NUMBERING SCHEME</scope>
</reference>
<dbReference type="EC" id="3.5.2.6"/>
<dbReference type="EMBL" id="Z35653">
    <property type="protein sequence ID" value="CAA84712.1"/>
    <property type="molecule type" value="Genomic_DNA"/>
</dbReference>
<dbReference type="PIR" id="S47330">
    <property type="entry name" value="S47330"/>
</dbReference>
<dbReference type="SMR" id="Q44674"/>
<dbReference type="STRING" id="692420.BAMF_1288"/>
<dbReference type="eggNOG" id="COG2367">
    <property type="taxonomic scope" value="Bacteria"/>
</dbReference>
<dbReference type="GO" id="GO:0008800">
    <property type="term" value="F:beta-lactamase activity"/>
    <property type="evidence" value="ECO:0007669"/>
    <property type="project" value="UniProtKB-EC"/>
</dbReference>
<dbReference type="GO" id="GO:0030655">
    <property type="term" value="P:beta-lactam antibiotic catabolic process"/>
    <property type="evidence" value="ECO:0007669"/>
    <property type="project" value="InterPro"/>
</dbReference>
<dbReference type="GO" id="GO:0046677">
    <property type="term" value="P:response to antibiotic"/>
    <property type="evidence" value="ECO:0007669"/>
    <property type="project" value="UniProtKB-KW"/>
</dbReference>
<dbReference type="Gene3D" id="3.40.710.10">
    <property type="entry name" value="DD-peptidase/beta-lactamase superfamily"/>
    <property type="match status" value="1"/>
</dbReference>
<dbReference type="InterPro" id="IPR012338">
    <property type="entry name" value="Beta-lactam/transpept-like"/>
</dbReference>
<dbReference type="InterPro" id="IPR045155">
    <property type="entry name" value="Beta-lactam_cat"/>
</dbReference>
<dbReference type="InterPro" id="IPR000871">
    <property type="entry name" value="Beta-lactam_class-A"/>
</dbReference>
<dbReference type="InterPro" id="IPR023650">
    <property type="entry name" value="Beta-lactam_class-A_AS"/>
</dbReference>
<dbReference type="NCBIfam" id="NF033103">
    <property type="entry name" value="bla_class_A"/>
    <property type="match status" value="1"/>
</dbReference>
<dbReference type="NCBIfam" id="NF012167">
    <property type="entry name" value="classA_firm"/>
    <property type="match status" value="1"/>
</dbReference>
<dbReference type="PANTHER" id="PTHR35333">
    <property type="entry name" value="BETA-LACTAMASE"/>
    <property type="match status" value="1"/>
</dbReference>
<dbReference type="PANTHER" id="PTHR35333:SF3">
    <property type="entry name" value="BETA-LACTAMASE-TYPE TRANSPEPTIDASE FOLD CONTAINING PROTEIN"/>
    <property type="match status" value="1"/>
</dbReference>
<dbReference type="Pfam" id="PF13354">
    <property type="entry name" value="Beta-lactamase2"/>
    <property type="match status" value="1"/>
</dbReference>
<dbReference type="PRINTS" id="PR00118">
    <property type="entry name" value="BLACTAMASEA"/>
</dbReference>
<dbReference type="SUPFAM" id="SSF56601">
    <property type="entry name" value="beta-lactamase/transpeptidase-like"/>
    <property type="match status" value="1"/>
</dbReference>
<dbReference type="PROSITE" id="PS00146">
    <property type="entry name" value="BETA_LACTAMASE_A"/>
    <property type="match status" value="1"/>
</dbReference>
<accession>Q44674</accession>
<keyword id="KW-0046">Antibiotic resistance</keyword>
<keyword id="KW-0378">Hydrolase</keyword>
<keyword id="KW-0732">Signal</keyword>
<gene>
    <name type="primary">penP</name>
</gene>
<name>BLAC_BACAM</name>
<comment type="function">
    <text>This protein is a beta-lactamase with a substrate specificity for penicillins.</text>
</comment>
<comment type="catalytic activity">
    <reaction evidence="2">
        <text>a beta-lactam + H2O = a substituted beta-amino acid</text>
        <dbReference type="Rhea" id="RHEA:20401"/>
        <dbReference type="ChEBI" id="CHEBI:15377"/>
        <dbReference type="ChEBI" id="CHEBI:35627"/>
        <dbReference type="ChEBI" id="CHEBI:140347"/>
        <dbReference type="EC" id="3.5.2.6"/>
    </reaction>
</comment>
<comment type="miscellaneous">
    <text evidence="4">The class A beta-lactamase family has a specific amino-acid numbering system, sometimes called Ambler or ABL numbering and often misspelt as Amber. A multiple sequence alignment was used to derive a consensus sequence and then the consensus was numbered taking into account insertions and deletions. This allows use of identical numbers, e.g. for active site residues, despite differences in protein length. UniProt always uses natural numbering of residues, hence there appear to be differences in numbering between this entry and some papers.</text>
</comment>
<comment type="similarity">
    <text evidence="3">Belongs to the class-A beta-lactamase family.</text>
</comment>
<protein>
    <recommendedName>
        <fullName>Beta-lactamase</fullName>
        <ecNumber>3.5.2.6</ecNumber>
    </recommendedName>
    <alternativeName>
        <fullName>Penicillinase</fullName>
    </alternativeName>
</protein>
<proteinExistence type="inferred from homology"/>
<feature type="signal peptide" evidence="1">
    <location>
        <begin position="1"/>
        <end position="34"/>
    </location>
</feature>
<feature type="chain" id="PRO_0000016969" description="Beta-lactamase">
    <location>
        <begin position="35"/>
        <end position="306"/>
    </location>
</feature>
<feature type="active site" description="Acyl-ester intermediate" evidence="2">
    <location>
        <position position="89"/>
    </location>
</feature>
<feature type="binding site" evidence="1">
    <location>
        <begin position="251"/>
        <end position="253"/>
    </location>
    <ligand>
        <name>substrate</name>
    </ligand>
</feature>
<organism>
    <name type="scientific">Bacillus amyloliquefaciens</name>
    <name type="common">Bacillus velezensis</name>
    <dbReference type="NCBI Taxonomy" id="1390"/>
    <lineage>
        <taxon>Bacteria</taxon>
        <taxon>Bacillati</taxon>
        <taxon>Bacillota</taxon>
        <taxon>Bacilli</taxon>
        <taxon>Bacillales</taxon>
        <taxon>Bacillaceae</taxon>
        <taxon>Bacillus</taxon>
        <taxon>Bacillus amyloliquefaciens group</taxon>
    </lineage>
</organism>
<sequence length="306" mass="33409">MNVKRKATLKFGICIGLLCVSFTGFNSLFGSTHAEAKSIENTKMTSCITNQKFVQLEKKFDARLGVYAIDTGSNKTIAYRPNERFAYASTYKVLAAAAVLKQKPIEKLNDVIRYTKEDLVTYSPITEKHLDTGMSLKEISEAAIRYSDNTAGNILLQQLGGPKGFEKSLKQIGDHVTKADRFETDLNSAIPGDIRDTSTAKALATDLKAFTLGNTLTTDKRTILTDWMRGNATGDELIRAGAPAGWEVGDKSGAGSYGTRNDIAIVWPPDRAPIVLAILTKRFTKDAEYDNALIAEAAKVALDDLK</sequence>